<accession>B3GZY1</accession>
<comment type="function">
    <text evidence="1">Catalyzes the isomerization between 2-isopropylmalate and 3-isopropylmalate, via the formation of 2-isopropylmaleate.</text>
</comment>
<comment type="catalytic activity">
    <reaction evidence="1">
        <text>(2R,3S)-3-isopropylmalate = (2S)-2-isopropylmalate</text>
        <dbReference type="Rhea" id="RHEA:32287"/>
        <dbReference type="ChEBI" id="CHEBI:1178"/>
        <dbReference type="ChEBI" id="CHEBI:35121"/>
        <dbReference type="EC" id="4.2.1.33"/>
    </reaction>
</comment>
<comment type="cofactor">
    <cofactor evidence="1">
        <name>[4Fe-4S] cluster</name>
        <dbReference type="ChEBI" id="CHEBI:49883"/>
    </cofactor>
    <text evidence="1">Binds 1 [4Fe-4S] cluster per subunit.</text>
</comment>
<comment type="pathway">
    <text evidence="1">Amino-acid biosynthesis; L-leucine biosynthesis; L-leucine from 3-methyl-2-oxobutanoate: step 2/4.</text>
</comment>
<comment type="subunit">
    <text evidence="1">Heterodimer of LeuC and LeuD.</text>
</comment>
<comment type="similarity">
    <text evidence="1">Belongs to the aconitase/IPM isomerase family. LeuC type 1 subfamily.</text>
</comment>
<name>LEUC_ACTP7</name>
<feature type="chain" id="PRO_1000135659" description="3-isopropylmalate dehydratase large subunit">
    <location>
        <begin position="1"/>
        <end position="469"/>
    </location>
</feature>
<feature type="binding site" evidence="1">
    <location>
        <position position="347"/>
    </location>
    <ligand>
        <name>[4Fe-4S] cluster</name>
        <dbReference type="ChEBI" id="CHEBI:49883"/>
    </ligand>
</feature>
<feature type="binding site" evidence="1">
    <location>
        <position position="408"/>
    </location>
    <ligand>
        <name>[4Fe-4S] cluster</name>
        <dbReference type="ChEBI" id="CHEBI:49883"/>
    </ligand>
</feature>
<feature type="binding site" evidence="1">
    <location>
        <position position="411"/>
    </location>
    <ligand>
        <name>[4Fe-4S] cluster</name>
        <dbReference type="ChEBI" id="CHEBI:49883"/>
    </ligand>
</feature>
<evidence type="ECO:0000255" key="1">
    <source>
        <dbReference type="HAMAP-Rule" id="MF_01026"/>
    </source>
</evidence>
<dbReference type="EC" id="4.2.1.33" evidence="1"/>
<dbReference type="EMBL" id="CP001091">
    <property type="protein sequence ID" value="ACE60793.1"/>
    <property type="molecule type" value="Genomic_DNA"/>
</dbReference>
<dbReference type="RefSeq" id="WP_005616620.1">
    <property type="nucleotide sequence ID" value="NC_010939.1"/>
</dbReference>
<dbReference type="SMR" id="B3GZY1"/>
<dbReference type="KEGG" id="apa:APP7_0141"/>
<dbReference type="HOGENOM" id="CLU_006714_3_4_6"/>
<dbReference type="UniPathway" id="UPA00048">
    <property type="reaction ID" value="UER00071"/>
</dbReference>
<dbReference type="Proteomes" id="UP000001226">
    <property type="component" value="Chromosome"/>
</dbReference>
<dbReference type="GO" id="GO:0003861">
    <property type="term" value="F:3-isopropylmalate dehydratase activity"/>
    <property type="evidence" value="ECO:0007669"/>
    <property type="project" value="UniProtKB-UniRule"/>
</dbReference>
<dbReference type="GO" id="GO:0051539">
    <property type="term" value="F:4 iron, 4 sulfur cluster binding"/>
    <property type="evidence" value="ECO:0007669"/>
    <property type="project" value="UniProtKB-KW"/>
</dbReference>
<dbReference type="GO" id="GO:0046872">
    <property type="term" value="F:metal ion binding"/>
    <property type="evidence" value="ECO:0007669"/>
    <property type="project" value="UniProtKB-KW"/>
</dbReference>
<dbReference type="GO" id="GO:0009098">
    <property type="term" value="P:L-leucine biosynthetic process"/>
    <property type="evidence" value="ECO:0007669"/>
    <property type="project" value="UniProtKB-UniRule"/>
</dbReference>
<dbReference type="CDD" id="cd01583">
    <property type="entry name" value="IPMI"/>
    <property type="match status" value="1"/>
</dbReference>
<dbReference type="FunFam" id="3.30.499.10:FF:000006">
    <property type="entry name" value="3-isopropylmalate dehydratase large subunit"/>
    <property type="match status" value="1"/>
</dbReference>
<dbReference type="FunFam" id="3.30.499.10:FF:000007">
    <property type="entry name" value="3-isopropylmalate dehydratase large subunit"/>
    <property type="match status" value="1"/>
</dbReference>
<dbReference type="Gene3D" id="3.30.499.10">
    <property type="entry name" value="Aconitase, domain 3"/>
    <property type="match status" value="2"/>
</dbReference>
<dbReference type="HAMAP" id="MF_01026">
    <property type="entry name" value="LeuC_type1"/>
    <property type="match status" value="1"/>
</dbReference>
<dbReference type="InterPro" id="IPR004430">
    <property type="entry name" value="3-IsopropMal_deHydase_lsu"/>
</dbReference>
<dbReference type="InterPro" id="IPR015931">
    <property type="entry name" value="Acnase/IPM_dHydase_lsu_aba_1/3"/>
</dbReference>
<dbReference type="InterPro" id="IPR001030">
    <property type="entry name" value="Acoase/IPM_deHydtase_lsu_aba"/>
</dbReference>
<dbReference type="InterPro" id="IPR018136">
    <property type="entry name" value="Aconitase_4Fe-4S_BS"/>
</dbReference>
<dbReference type="InterPro" id="IPR036008">
    <property type="entry name" value="Aconitase_4Fe-4S_dom"/>
</dbReference>
<dbReference type="InterPro" id="IPR050067">
    <property type="entry name" value="IPM_dehydratase_rel_enz"/>
</dbReference>
<dbReference type="InterPro" id="IPR033941">
    <property type="entry name" value="IPMI_cat"/>
</dbReference>
<dbReference type="NCBIfam" id="TIGR00170">
    <property type="entry name" value="leuC"/>
    <property type="match status" value="1"/>
</dbReference>
<dbReference type="NCBIfam" id="NF004016">
    <property type="entry name" value="PRK05478.1"/>
    <property type="match status" value="1"/>
</dbReference>
<dbReference type="NCBIfam" id="NF009116">
    <property type="entry name" value="PRK12466.1"/>
    <property type="match status" value="1"/>
</dbReference>
<dbReference type="PANTHER" id="PTHR43822:SF9">
    <property type="entry name" value="3-ISOPROPYLMALATE DEHYDRATASE"/>
    <property type="match status" value="1"/>
</dbReference>
<dbReference type="PANTHER" id="PTHR43822">
    <property type="entry name" value="HOMOACONITASE, MITOCHONDRIAL-RELATED"/>
    <property type="match status" value="1"/>
</dbReference>
<dbReference type="Pfam" id="PF00330">
    <property type="entry name" value="Aconitase"/>
    <property type="match status" value="1"/>
</dbReference>
<dbReference type="PRINTS" id="PR00415">
    <property type="entry name" value="ACONITASE"/>
</dbReference>
<dbReference type="SUPFAM" id="SSF53732">
    <property type="entry name" value="Aconitase iron-sulfur domain"/>
    <property type="match status" value="1"/>
</dbReference>
<dbReference type="PROSITE" id="PS00450">
    <property type="entry name" value="ACONITASE_1"/>
    <property type="match status" value="1"/>
</dbReference>
<dbReference type="PROSITE" id="PS01244">
    <property type="entry name" value="ACONITASE_2"/>
    <property type="match status" value="1"/>
</dbReference>
<organism>
    <name type="scientific">Actinobacillus pleuropneumoniae serotype 7 (strain AP76)</name>
    <dbReference type="NCBI Taxonomy" id="537457"/>
    <lineage>
        <taxon>Bacteria</taxon>
        <taxon>Pseudomonadati</taxon>
        <taxon>Pseudomonadota</taxon>
        <taxon>Gammaproteobacteria</taxon>
        <taxon>Pasteurellales</taxon>
        <taxon>Pasteurellaceae</taxon>
        <taxon>Actinobacillus</taxon>
    </lineage>
</organism>
<proteinExistence type="inferred from homology"/>
<protein>
    <recommendedName>
        <fullName evidence="1">3-isopropylmalate dehydratase large subunit</fullName>
        <ecNumber evidence="1">4.2.1.33</ecNumber>
    </recommendedName>
    <alternativeName>
        <fullName evidence="1">Alpha-IPM isomerase</fullName>
        <shortName evidence="1">IPMI</shortName>
    </alternativeName>
    <alternativeName>
        <fullName evidence="1">Isopropylmalate isomerase</fullName>
    </alternativeName>
</protein>
<reference key="1">
    <citation type="submission" date="2008-06" db="EMBL/GenBank/DDBJ databases">
        <title>Genome and proteome analysis of A. pleuropneumoniae serotype 7.</title>
        <authorList>
            <person name="Linke B."/>
            <person name="Buettner F."/>
            <person name="Martinez-Arias R."/>
            <person name="Goesmann A."/>
            <person name="Baltes N."/>
            <person name="Tegetmeyer H."/>
            <person name="Singh M."/>
            <person name="Gerlach G.F."/>
        </authorList>
    </citation>
    <scope>NUCLEOTIDE SEQUENCE [LARGE SCALE GENOMIC DNA]</scope>
    <source>
        <strain>AP76</strain>
    </source>
</reference>
<keyword id="KW-0004">4Fe-4S</keyword>
<keyword id="KW-0028">Amino-acid biosynthesis</keyword>
<keyword id="KW-0100">Branched-chain amino acid biosynthesis</keyword>
<keyword id="KW-0408">Iron</keyword>
<keyword id="KW-0411">Iron-sulfur</keyword>
<keyword id="KW-0432">Leucine biosynthesis</keyword>
<keyword id="KW-0456">Lyase</keyword>
<keyword id="KW-0479">Metal-binding</keyword>
<gene>
    <name evidence="1" type="primary">leuC</name>
    <name type="ordered locus">APP7_0141</name>
</gene>
<sequence length="469" mass="50675">MAKTLYEKLFDAHVVYEAAGETPILYINRHLIHEVTSPQAFDGLRVAGRQVRQIGKTFGTMDHSISTQVRDVNKLEGQAKIQVLELAKNCEANGISLFDMQTKEQGIVHVMGPEQGLTLPGMTIVCGDSHTATHGAFGALAFGIGTSEVEHVLATQTLKQARAKSMKVEVRGKVNPGITAKDIVLAIIGKTTMAGGTGHVVEFCGEAIRDLSMEGRMTVCNMAIEFGAKAGLVAPDETTFAYLKGRPHAPKGKDWDDAVEYWKTLKSDDDAVFDSVVVLEAKDIAPQVTWGTNPGQVIGIDQVVPNPQEMADPVTKASAEKALAYIGLDANTDMKNIPVDQVFIGSCTNSRIEDLRAAAAVMKGRKKADNVKRVLVVPGSGLVKEQAEKEGLDKIFIEAGAEWRNPGCSMCLGMNDDRLGEWERCASTSNRNFEGRQGRNGRTHLVSPAMAAAAAMFGKFVDIRHVELN</sequence>